<sequence>MFLFDWFWNVLSFLGLYNKNAKILFLGLDNAGKTTLLGVLKDGRLSSYLPTFHPTSEELAMGNIRFKAFDLGGHESARRLWKDYYPSVDAIVYLIDSSAQDRFVESKKELDSLLSSDELANVPFLILGNKVDIGNTSEEKFRASLGLTQTTGKGKTTLNGVRPIEVFMCSVVKRYGYAEGFRWLANYL</sequence>
<organism>
    <name type="scientific">Dictyostelium discoideum</name>
    <name type="common">Social amoeba</name>
    <dbReference type="NCBI Taxonomy" id="44689"/>
    <lineage>
        <taxon>Eukaryota</taxon>
        <taxon>Amoebozoa</taxon>
        <taxon>Evosea</taxon>
        <taxon>Eumycetozoa</taxon>
        <taxon>Dictyostelia</taxon>
        <taxon>Dictyosteliales</taxon>
        <taxon>Dictyosteliaceae</taxon>
        <taxon>Dictyostelium</taxon>
    </lineage>
</organism>
<proteinExistence type="evidence at protein level"/>
<reference key="1">
    <citation type="journal article" date="2002" name="Nature">
        <title>Sequence and analysis of chromosome 2 of Dictyostelium discoideum.</title>
        <authorList>
            <person name="Gloeckner G."/>
            <person name="Eichinger L."/>
            <person name="Szafranski K."/>
            <person name="Pachebat J.A."/>
            <person name="Bankier A.T."/>
            <person name="Dear P.H."/>
            <person name="Lehmann R."/>
            <person name="Baumgart C."/>
            <person name="Parra G."/>
            <person name="Abril J.F."/>
            <person name="Guigo R."/>
            <person name="Kumpf K."/>
            <person name="Tunggal B."/>
            <person name="Cox E.C."/>
            <person name="Quail M.A."/>
            <person name="Platzer M."/>
            <person name="Rosenthal A."/>
            <person name="Noegel A.A."/>
        </authorList>
    </citation>
    <scope>NUCLEOTIDE SEQUENCE [LARGE SCALE GENOMIC DNA]</scope>
    <source>
        <strain>AX4</strain>
    </source>
</reference>
<reference key="2">
    <citation type="journal article" date="2005" name="Nature">
        <title>The genome of the social amoeba Dictyostelium discoideum.</title>
        <authorList>
            <person name="Eichinger L."/>
            <person name="Pachebat J.A."/>
            <person name="Gloeckner G."/>
            <person name="Rajandream M.A."/>
            <person name="Sucgang R."/>
            <person name="Berriman M."/>
            <person name="Song J."/>
            <person name="Olsen R."/>
            <person name="Szafranski K."/>
            <person name="Xu Q."/>
            <person name="Tunggal B."/>
            <person name="Kummerfeld S."/>
            <person name="Madera M."/>
            <person name="Konfortov B.A."/>
            <person name="Rivero F."/>
            <person name="Bankier A.T."/>
            <person name="Lehmann R."/>
            <person name="Hamlin N."/>
            <person name="Davies R."/>
            <person name="Gaudet P."/>
            <person name="Fey P."/>
            <person name="Pilcher K."/>
            <person name="Chen G."/>
            <person name="Saunders D."/>
            <person name="Sodergren E.J."/>
            <person name="Davis P."/>
            <person name="Kerhornou A."/>
            <person name="Nie X."/>
            <person name="Hall N."/>
            <person name="Anjard C."/>
            <person name="Hemphill L."/>
            <person name="Bason N."/>
            <person name="Farbrother P."/>
            <person name="Desany B."/>
            <person name="Just E."/>
            <person name="Morio T."/>
            <person name="Rost R."/>
            <person name="Churcher C.M."/>
            <person name="Cooper J."/>
            <person name="Haydock S."/>
            <person name="van Driessche N."/>
            <person name="Cronin A."/>
            <person name="Goodhead I."/>
            <person name="Muzny D.M."/>
            <person name="Mourier T."/>
            <person name="Pain A."/>
            <person name="Lu M."/>
            <person name="Harper D."/>
            <person name="Lindsay R."/>
            <person name="Hauser H."/>
            <person name="James K.D."/>
            <person name="Quiles M."/>
            <person name="Madan Babu M."/>
            <person name="Saito T."/>
            <person name="Buchrieser C."/>
            <person name="Wardroper A."/>
            <person name="Felder M."/>
            <person name="Thangavelu M."/>
            <person name="Johnson D."/>
            <person name="Knights A."/>
            <person name="Loulseged H."/>
            <person name="Mungall K.L."/>
            <person name="Oliver K."/>
            <person name="Price C."/>
            <person name="Quail M.A."/>
            <person name="Urushihara H."/>
            <person name="Hernandez J."/>
            <person name="Rabbinowitsch E."/>
            <person name="Steffen D."/>
            <person name="Sanders M."/>
            <person name="Ma J."/>
            <person name="Kohara Y."/>
            <person name="Sharp S."/>
            <person name="Simmonds M.N."/>
            <person name="Spiegler S."/>
            <person name="Tivey A."/>
            <person name="Sugano S."/>
            <person name="White B."/>
            <person name="Walker D."/>
            <person name="Woodward J.R."/>
            <person name="Winckler T."/>
            <person name="Tanaka Y."/>
            <person name="Shaulsky G."/>
            <person name="Schleicher M."/>
            <person name="Weinstock G.M."/>
            <person name="Rosenthal A."/>
            <person name="Cox E.C."/>
            <person name="Chisholm R.L."/>
            <person name="Gibbs R.A."/>
            <person name="Loomis W.F."/>
            <person name="Platzer M."/>
            <person name="Kay R.R."/>
            <person name="Williams J.G."/>
            <person name="Dear P.H."/>
            <person name="Noegel A.A."/>
            <person name="Barrell B.G."/>
            <person name="Kuspa A."/>
        </authorList>
    </citation>
    <scope>NUCLEOTIDE SEQUENCE [LARGE SCALE GENOMIC DNA]</scope>
    <source>
        <strain>AX4</strain>
    </source>
</reference>
<reference key="3">
    <citation type="journal article" date="2006" name="J. Proteome Res.">
        <title>Identification of novel centrosomal proteins in Dictyostelium discoideum by comparative proteomic approaches.</title>
        <authorList>
            <person name="Reinders Y."/>
            <person name="Schulz I."/>
            <person name="Graef R."/>
            <person name="Sickmann A."/>
        </authorList>
    </citation>
    <scope>IDENTIFICATION BY MASS SPECTROMETRY [LARGE SCALE ANALYSIS]</scope>
</reference>
<reference key="4">
    <citation type="journal article" date="2006" name="Mol. Cell. Proteomics">
        <title>Proteomics fingerprinting of phagosome maturation and evidence for the role of a Galpha during uptake.</title>
        <authorList>
            <person name="Gotthardt D."/>
            <person name="Blancheteau V."/>
            <person name="Bosserhoff A."/>
            <person name="Ruppert T."/>
            <person name="Delorenzi M."/>
            <person name="Soldati T."/>
        </authorList>
    </citation>
    <scope>IDENTIFICATION BY MASS SPECTROMETRY [LARGE SCALE ANALYSIS]</scope>
    <source>
        <strain>AX2</strain>
    </source>
</reference>
<dbReference type="EC" id="3.6.5.2" evidence="1"/>
<dbReference type="EMBL" id="AAFI02000008">
    <property type="protein sequence ID" value="EAL71300.1"/>
    <property type="molecule type" value="Genomic_DNA"/>
</dbReference>
<dbReference type="RefSeq" id="XP_645274.1">
    <property type="nucleotide sequence ID" value="XM_640182.1"/>
</dbReference>
<dbReference type="SMR" id="Q559R0"/>
<dbReference type="FunCoup" id="Q559R0">
    <property type="interactions" value="898"/>
</dbReference>
<dbReference type="IntAct" id="Q559R0">
    <property type="interactions" value="1"/>
</dbReference>
<dbReference type="STRING" id="44689.Q559R0"/>
<dbReference type="PaxDb" id="44689-DDB0229965"/>
<dbReference type="EnsemblProtists" id="EAL71300">
    <property type="protein sequence ID" value="EAL71300"/>
    <property type="gene ID" value="DDB_G0272296"/>
</dbReference>
<dbReference type="GeneID" id="8618440"/>
<dbReference type="KEGG" id="ddi:DDB_G0272296"/>
<dbReference type="dictyBase" id="DDB_G0272296">
    <property type="gene designation" value="sarA"/>
</dbReference>
<dbReference type="VEuPathDB" id="AmoebaDB:DDB_G0272296"/>
<dbReference type="eggNOG" id="KOG0077">
    <property type="taxonomic scope" value="Eukaryota"/>
</dbReference>
<dbReference type="HOGENOM" id="CLU_040729_6_0_1"/>
<dbReference type="InParanoid" id="Q559R0"/>
<dbReference type="OMA" id="GLWNKHG"/>
<dbReference type="PhylomeDB" id="Q559R0"/>
<dbReference type="Reactome" id="R-DDI-204005">
    <property type="pathway name" value="COPII-mediated vesicle transport"/>
</dbReference>
<dbReference type="Reactome" id="R-DDI-5694530">
    <property type="pathway name" value="Cargo concentration in the ER"/>
</dbReference>
<dbReference type="Reactome" id="R-DDI-983170">
    <property type="pathway name" value="Antigen Presentation: Folding, assembly and peptide loading of class I MHC"/>
</dbReference>
<dbReference type="PRO" id="PR:Q559R0"/>
<dbReference type="Proteomes" id="UP000002195">
    <property type="component" value="Chromosome 2"/>
</dbReference>
<dbReference type="GO" id="GO:0030127">
    <property type="term" value="C:COPII vesicle coat"/>
    <property type="evidence" value="ECO:0000250"/>
    <property type="project" value="dictyBase"/>
</dbReference>
<dbReference type="GO" id="GO:0005829">
    <property type="term" value="C:cytosol"/>
    <property type="evidence" value="ECO:0007669"/>
    <property type="project" value="UniProtKB-SubCell"/>
</dbReference>
<dbReference type="GO" id="GO:0070971">
    <property type="term" value="C:endoplasmic reticulum exit site"/>
    <property type="evidence" value="ECO:0000318"/>
    <property type="project" value="GO_Central"/>
</dbReference>
<dbReference type="GO" id="GO:0005789">
    <property type="term" value="C:endoplasmic reticulum membrane"/>
    <property type="evidence" value="ECO:0007669"/>
    <property type="project" value="UniProtKB-SubCell"/>
</dbReference>
<dbReference type="GO" id="GO:0032580">
    <property type="term" value="C:Golgi cisterna membrane"/>
    <property type="evidence" value="ECO:0007669"/>
    <property type="project" value="UniProtKB-SubCell"/>
</dbReference>
<dbReference type="GO" id="GO:0045335">
    <property type="term" value="C:phagocytic vesicle"/>
    <property type="evidence" value="ECO:0007005"/>
    <property type="project" value="dictyBase"/>
</dbReference>
<dbReference type="GO" id="GO:0005525">
    <property type="term" value="F:GTP binding"/>
    <property type="evidence" value="ECO:0007669"/>
    <property type="project" value="UniProtKB-KW"/>
</dbReference>
<dbReference type="GO" id="GO:0003924">
    <property type="term" value="F:GTPase activity"/>
    <property type="evidence" value="ECO:0000318"/>
    <property type="project" value="GO_Central"/>
</dbReference>
<dbReference type="GO" id="GO:0046872">
    <property type="term" value="F:metal ion binding"/>
    <property type="evidence" value="ECO:0007669"/>
    <property type="project" value="UniProtKB-KW"/>
</dbReference>
<dbReference type="GO" id="GO:0006888">
    <property type="term" value="P:endoplasmic reticulum to Golgi vesicle-mediated transport"/>
    <property type="evidence" value="ECO:0000318"/>
    <property type="project" value="GO_Central"/>
</dbReference>
<dbReference type="GO" id="GO:0006886">
    <property type="term" value="P:intracellular protein transport"/>
    <property type="evidence" value="ECO:0007669"/>
    <property type="project" value="InterPro"/>
</dbReference>
<dbReference type="GO" id="GO:0061024">
    <property type="term" value="P:membrane organization"/>
    <property type="evidence" value="ECO:0000318"/>
    <property type="project" value="GO_Central"/>
</dbReference>
<dbReference type="GO" id="GO:0003400">
    <property type="term" value="P:regulation of COPII vesicle coating"/>
    <property type="evidence" value="ECO:0000318"/>
    <property type="project" value="GO_Central"/>
</dbReference>
<dbReference type="GO" id="GO:0016050">
    <property type="term" value="P:vesicle organization"/>
    <property type="evidence" value="ECO:0000318"/>
    <property type="project" value="GO_Central"/>
</dbReference>
<dbReference type="CDD" id="cd00879">
    <property type="entry name" value="Sar1"/>
    <property type="match status" value="1"/>
</dbReference>
<dbReference type="FunFam" id="3.40.50.300:FF:000161">
    <property type="entry name" value="Small COPII coat GTPase"/>
    <property type="match status" value="1"/>
</dbReference>
<dbReference type="Gene3D" id="3.40.50.300">
    <property type="entry name" value="P-loop containing nucleotide triphosphate hydrolases"/>
    <property type="match status" value="1"/>
</dbReference>
<dbReference type="InterPro" id="IPR027417">
    <property type="entry name" value="P-loop_NTPase"/>
</dbReference>
<dbReference type="InterPro" id="IPR005225">
    <property type="entry name" value="Small_GTP-bd"/>
</dbReference>
<dbReference type="InterPro" id="IPR006689">
    <property type="entry name" value="Small_GTPase_ARF/SAR"/>
</dbReference>
<dbReference type="InterPro" id="IPR006687">
    <property type="entry name" value="Small_GTPase_SAR1"/>
</dbReference>
<dbReference type="NCBIfam" id="TIGR00231">
    <property type="entry name" value="small_GTP"/>
    <property type="match status" value="1"/>
</dbReference>
<dbReference type="PANTHER" id="PTHR45684">
    <property type="entry name" value="RE74312P"/>
    <property type="match status" value="1"/>
</dbReference>
<dbReference type="Pfam" id="PF00025">
    <property type="entry name" value="Arf"/>
    <property type="match status" value="1"/>
</dbReference>
<dbReference type="PRINTS" id="PR00328">
    <property type="entry name" value="SAR1GTPBP"/>
</dbReference>
<dbReference type="SMART" id="SM00177">
    <property type="entry name" value="ARF"/>
    <property type="match status" value="1"/>
</dbReference>
<dbReference type="SMART" id="SM00178">
    <property type="entry name" value="SAR"/>
    <property type="match status" value="1"/>
</dbReference>
<dbReference type="SUPFAM" id="SSF52540">
    <property type="entry name" value="P-loop containing nucleoside triphosphate hydrolases"/>
    <property type="match status" value="1"/>
</dbReference>
<dbReference type="PROSITE" id="PS51422">
    <property type="entry name" value="SAR1"/>
    <property type="match status" value="1"/>
</dbReference>
<comment type="function">
    <text evidence="1">Small GTPase that cycles between an active GTP-bound and an inactive GDP-bound state and mainly functions in vesicle-mediated endoplasmic reticulum (ER) to Golgi transport. The active GTP-bound form inserts into the endoplasmic reticulum membrane where it recruits the remainder of the coat protein complex II/COPII. The coat protein complex II assembling and polymerizing on endoplasmic reticulum membrane is responsible for both the sorting of cargos and the deformation and budding of membranes into vesicles destined to the Golgi.</text>
</comment>
<comment type="catalytic activity">
    <reaction evidence="1">
        <text>GTP + H2O = GDP + phosphate + H(+)</text>
        <dbReference type="Rhea" id="RHEA:19669"/>
        <dbReference type="ChEBI" id="CHEBI:15377"/>
        <dbReference type="ChEBI" id="CHEBI:15378"/>
        <dbReference type="ChEBI" id="CHEBI:37565"/>
        <dbReference type="ChEBI" id="CHEBI:43474"/>
        <dbReference type="ChEBI" id="CHEBI:58189"/>
        <dbReference type="EC" id="3.6.5.2"/>
    </reaction>
    <physiologicalReaction direction="left-to-right" evidence="1">
        <dbReference type="Rhea" id="RHEA:19670"/>
    </physiologicalReaction>
</comment>
<comment type="activity regulation">
    <text evidence="1">Small GTPases activation is mediated by guanine exchange factors (GEF), while inactivation through hydrolysis of the bound GTP is stimulated by GTPase activating proteins (GAP).</text>
</comment>
<comment type="subunit">
    <text evidence="1">Homodimer; upon association with membrane. Part of the coat protein complex II/COPII, composed of SEC23/24 and SEC13/31 heterodimers, that it helps recruit and assemble on endoplasmic reticulum (ER) membranes at ER exit sites.</text>
</comment>
<comment type="subcellular location">
    <subcellularLocation>
        <location evidence="1">Endoplasmic reticulum membrane</location>
        <topology evidence="1">Peripheral membrane protein</topology>
    </subcellularLocation>
    <subcellularLocation>
        <location evidence="1">Golgi apparatus</location>
        <location evidence="1">Golgi stack membrane</location>
        <topology evidence="1">Peripheral membrane protein</topology>
    </subcellularLocation>
    <subcellularLocation>
        <location evidence="1">Cytoplasm</location>
        <location evidence="1">Cytosol</location>
    </subcellularLocation>
    <text evidence="1">Active at endoplasmic reticulum exit sites (ERES) where it inserts into the membrane and recruits the remainder of the coat protein complex II/COPII.</text>
</comment>
<comment type="similarity">
    <text evidence="4">Belongs to the small GTPase superfamily. SAR1 family.</text>
</comment>
<keyword id="KW-0963">Cytoplasm</keyword>
<keyword id="KW-0256">Endoplasmic reticulum</keyword>
<keyword id="KW-0931">ER-Golgi transport</keyword>
<keyword id="KW-0333">Golgi apparatus</keyword>
<keyword id="KW-0342">GTP-binding</keyword>
<keyword id="KW-0378">Hydrolase</keyword>
<keyword id="KW-0460">Magnesium</keyword>
<keyword id="KW-0472">Membrane</keyword>
<keyword id="KW-0479">Metal-binding</keyword>
<keyword id="KW-0547">Nucleotide-binding</keyword>
<keyword id="KW-0653">Protein transport</keyword>
<keyword id="KW-1185">Reference proteome</keyword>
<keyword id="KW-0813">Transport</keyword>
<evidence type="ECO:0000250" key="1">
    <source>
        <dbReference type="UniProtKB" id="Q9NR31"/>
    </source>
</evidence>
<evidence type="ECO:0000250" key="2">
    <source>
        <dbReference type="UniProtKB" id="Q9QVY3"/>
    </source>
</evidence>
<evidence type="ECO:0000250" key="3">
    <source>
        <dbReference type="UniProtKB" id="Q9Y6B6"/>
    </source>
</evidence>
<evidence type="ECO:0000305" key="4"/>
<name>SAR1A_DICDI</name>
<gene>
    <name type="primary">sarA</name>
    <name type="ORF">DDB_G0272296</name>
</gene>
<protein>
    <recommendedName>
        <fullName evidence="1">Small COPII coat GTPase SAR1A</fullName>
        <ecNumber evidence="1">3.6.5.2</ecNumber>
    </recommendedName>
</protein>
<feature type="chain" id="PRO_0000312556" description="Small COPII coat GTPase SAR1A">
    <location>
        <begin position="1"/>
        <end position="188"/>
    </location>
</feature>
<feature type="region of interest" description="Mediates recruitment to ER membranes" evidence="2">
    <location>
        <begin position="10"/>
        <end position="14"/>
    </location>
</feature>
<feature type="short sequence motif" description="STAR; SAR1-N-terminal activation recruitment. Required for the activation and subsequent recruitment to ER membrane" evidence="2">
    <location>
        <begin position="2"/>
        <end position="4"/>
    </location>
</feature>
<feature type="binding site" evidence="1">
    <location>
        <position position="29"/>
    </location>
    <ligand>
        <name>Mg(2+)</name>
        <dbReference type="ChEBI" id="CHEBI:18420"/>
    </ligand>
</feature>
<feature type="binding site" evidence="1">
    <location>
        <position position="30"/>
    </location>
    <ligand>
        <name>GDP</name>
        <dbReference type="ChEBI" id="CHEBI:58189"/>
    </ligand>
</feature>
<feature type="binding site" evidence="3">
    <location>
        <position position="30"/>
    </location>
    <ligand>
        <name>GTP</name>
        <dbReference type="ChEBI" id="CHEBI:37565"/>
    </ligand>
</feature>
<feature type="binding site" evidence="1">
    <location>
        <position position="31"/>
    </location>
    <ligand>
        <name>GDP</name>
        <dbReference type="ChEBI" id="CHEBI:58189"/>
    </ligand>
</feature>
<feature type="binding site" evidence="1">
    <location>
        <position position="32"/>
    </location>
    <ligand>
        <name>GDP</name>
        <dbReference type="ChEBI" id="CHEBI:58189"/>
    </ligand>
</feature>
<feature type="binding site" evidence="3">
    <location>
        <position position="32"/>
    </location>
    <ligand>
        <name>GTP</name>
        <dbReference type="ChEBI" id="CHEBI:37565"/>
    </ligand>
</feature>
<feature type="binding site" evidence="1">
    <location>
        <position position="33"/>
    </location>
    <ligand>
        <name>GDP</name>
        <dbReference type="ChEBI" id="CHEBI:58189"/>
    </ligand>
</feature>
<feature type="binding site" evidence="3">
    <location>
        <position position="33"/>
    </location>
    <ligand>
        <name>GTP</name>
        <dbReference type="ChEBI" id="CHEBI:37565"/>
    </ligand>
</feature>
<feature type="binding site" evidence="1">
    <location>
        <position position="34"/>
    </location>
    <ligand>
        <name>GDP</name>
        <dbReference type="ChEBI" id="CHEBI:58189"/>
    </ligand>
</feature>
<feature type="binding site" evidence="3">
    <location>
        <position position="34"/>
    </location>
    <ligand>
        <name>GTP</name>
        <dbReference type="ChEBI" id="CHEBI:37565"/>
    </ligand>
</feature>
<feature type="binding site" evidence="1">
    <location>
        <position position="35"/>
    </location>
    <ligand>
        <name>GDP</name>
        <dbReference type="ChEBI" id="CHEBI:58189"/>
    </ligand>
</feature>
<feature type="binding site" evidence="3">
    <location>
        <position position="35"/>
    </location>
    <ligand>
        <name>GTP</name>
        <dbReference type="ChEBI" id="CHEBI:37565"/>
    </ligand>
</feature>
<feature type="binding site" evidence="1">
    <location>
        <position position="70"/>
    </location>
    <ligand>
        <name>Mg(2+)</name>
        <dbReference type="ChEBI" id="CHEBI:18420"/>
    </ligand>
</feature>
<feature type="binding site" evidence="1">
    <location>
        <position position="129"/>
    </location>
    <ligand>
        <name>GDP</name>
        <dbReference type="ChEBI" id="CHEBI:58189"/>
    </ligand>
</feature>
<feature type="binding site" evidence="3">
    <location>
        <position position="129"/>
    </location>
    <ligand>
        <name>GTP</name>
        <dbReference type="ChEBI" id="CHEBI:37565"/>
    </ligand>
</feature>
<feature type="binding site" evidence="1">
    <location>
        <position position="130"/>
    </location>
    <ligand>
        <name>GDP</name>
        <dbReference type="ChEBI" id="CHEBI:58189"/>
    </ligand>
</feature>
<feature type="binding site" evidence="3">
    <location>
        <position position="130"/>
    </location>
    <ligand>
        <name>GTP</name>
        <dbReference type="ChEBI" id="CHEBI:37565"/>
    </ligand>
</feature>
<feature type="binding site" evidence="1">
    <location>
        <position position="132"/>
    </location>
    <ligand>
        <name>GDP</name>
        <dbReference type="ChEBI" id="CHEBI:58189"/>
    </ligand>
</feature>
<feature type="binding site" evidence="3">
    <location>
        <position position="132"/>
    </location>
    <ligand>
        <name>GTP</name>
        <dbReference type="ChEBI" id="CHEBI:37565"/>
    </ligand>
</feature>
<feature type="binding site" evidence="1">
    <location>
        <position position="171"/>
    </location>
    <ligand>
        <name>GDP</name>
        <dbReference type="ChEBI" id="CHEBI:58189"/>
    </ligand>
</feature>
<feature type="binding site" evidence="3">
    <location>
        <position position="171"/>
    </location>
    <ligand>
        <name>GTP</name>
        <dbReference type="ChEBI" id="CHEBI:37565"/>
    </ligand>
</feature>
<accession>Q559R0</accession>